<organism>
    <name type="scientific">Corynebacterium efficiens (strain DSM 44549 / YS-314 / AJ 12310 / JCM 11189 / NBRC 100395)</name>
    <dbReference type="NCBI Taxonomy" id="196164"/>
    <lineage>
        <taxon>Bacteria</taxon>
        <taxon>Bacillati</taxon>
        <taxon>Actinomycetota</taxon>
        <taxon>Actinomycetes</taxon>
        <taxon>Mycobacteriales</taxon>
        <taxon>Corynebacteriaceae</taxon>
        <taxon>Corynebacterium</taxon>
    </lineage>
</organism>
<comment type="similarity">
    <text evidence="1">Belongs to the UPF0102 family.</text>
</comment>
<comment type="sequence caution" evidence="2">
    <conflict type="erroneous initiation">
        <sequence resource="EMBL-CDS" id="BAC18730"/>
    </conflict>
</comment>
<protein>
    <recommendedName>
        <fullName evidence="1">UPF0102 protein CE1920</fullName>
    </recommendedName>
</protein>
<proteinExistence type="inferred from homology"/>
<dbReference type="EMBL" id="BA000035">
    <property type="protein sequence ID" value="BAC18730.1"/>
    <property type="status" value="ALT_INIT"/>
    <property type="molecule type" value="Genomic_DNA"/>
</dbReference>
<dbReference type="RefSeq" id="WP_006767921.1">
    <property type="nucleotide sequence ID" value="NC_004369.1"/>
</dbReference>
<dbReference type="SMR" id="Q8FP66"/>
<dbReference type="STRING" id="196164.gene:10742348"/>
<dbReference type="KEGG" id="cef:CE1920"/>
<dbReference type="eggNOG" id="COG0792">
    <property type="taxonomic scope" value="Bacteria"/>
</dbReference>
<dbReference type="HOGENOM" id="CLU_115353_2_2_11"/>
<dbReference type="OrthoDB" id="9794876at2"/>
<dbReference type="Proteomes" id="UP000001409">
    <property type="component" value="Chromosome"/>
</dbReference>
<dbReference type="GO" id="GO:0003676">
    <property type="term" value="F:nucleic acid binding"/>
    <property type="evidence" value="ECO:0007669"/>
    <property type="project" value="InterPro"/>
</dbReference>
<dbReference type="CDD" id="cd20736">
    <property type="entry name" value="PoNe_Nuclease"/>
    <property type="match status" value="1"/>
</dbReference>
<dbReference type="Gene3D" id="3.40.1350.10">
    <property type="match status" value="1"/>
</dbReference>
<dbReference type="HAMAP" id="MF_00048">
    <property type="entry name" value="UPF0102"/>
    <property type="match status" value="1"/>
</dbReference>
<dbReference type="InterPro" id="IPR011335">
    <property type="entry name" value="Restrct_endonuc-II-like"/>
</dbReference>
<dbReference type="InterPro" id="IPR011856">
    <property type="entry name" value="tRNA_endonuc-like_dom_sf"/>
</dbReference>
<dbReference type="InterPro" id="IPR003509">
    <property type="entry name" value="UPF0102_YraN-like"/>
</dbReference>
<dbReference type="NCBIfam" id="NF009150">
    <property type="entry name" value="PRK12497.1-3"/>
    <property type="match status" value="1"/>
</dbReference>
<dbReference type="NCBIfam" id="NF009154">
    <property type="entry name" value="PRK12497.3-3"/>
    <property type="match status" value="1"/>
</dbReference>
<dbReference type="PANTHER" id="PTHR34039">
    <property type="entry name" value="UPF0102 PROTEIN YRAN"/>
    <property type="match status" value="1"/>
</dbReference>
<dbReference type="PANTHER" id="PTHR34039:SF1">
    <property type="entry name" value="UPF0102 PROTEIN YRAN"/>
    <property type="match status" value="1"/>
</dbReference>
<dbReference type="Pfam" id="PF02021">
    <property type="entry name" value="UPF0102"/>
    <property type="match status" value="1"/>
</dbReference>
<dbReference type="SUPFAM" id="SSF52980">
    <property type="entry name" value="Restriction endonuclease-like"/>
    <property type="match status" value="1"/>
</dbReference>
<reference key="1">
    <citation type="journal article" date="2003" name="Genome Res.">
        <title>Comparative complete genome sequence analysis of the amino acid replacements responsible for the thermostability of Corynebacterium efficiens.</title>
        <authorList>
            <person name="Nishio Y."/>
            <person name="Nakamura Y."/>
            <person name="Kawarabayasi Y."/>
            <person name="Usuda Y."/>
            <person name="Kimura E."/>
            <person name="Sugimoto S."/>
            <person name="Matsui K."/>
            <person name="Yamagishi A."/>
            <person name="Kikuchi H."/>
            <person name="Ikeo K."/>
            <person name="Gojobori T."/>
        </authorList>
    </citation>
    <scope>NUCLEOTIDE SEQUENCE [LARGE SCALE GENOMIC DNA]</scope>
    <source>
        <strain>DSM 44549 / YS-314 / AJ 12310 / JCM 11189 / NBRC 100395</strain>
    </source>
</reference>
<sequence>MKTEKQKLGAVGENLVATHYVRRGYGIVERNVRYPFGELDLIVEDSDGTTVFVEVKTRRGTGFGAAESVTGRKLTRMRRAATTWLQGRHYREIRFDVVTVVIDPTTGGYVLDHFEGVDDGAR</sequence>
<accession>Q8FP66</accession>
<evidence type="ECO:0000255" key="1">
    <source>
        <dbReference type="HAMAP-Rule" id="MF_00048"/>
    </source>
</evidence>
<evidence type="ECO:0000305" key="2"/>
<feature type="chain" id="PRO_0000167345" description="UPF0102 protein CE1920">
    <location>
        <begin position="1"/>
        <end position="122"/>
    </location>
</feature>
<name>Y1920_COREF</name>
<gene>
    <name type="ordered locus">CE1920</name>
</gene>
<keyword id="KW-1185">Reference proteome</keyword>